<keyword id="KW-0066">ATP synthesis</keyword>
<keyword id="KW-1003">Cell membrane</keyword>
<keyword id="KW-0138">CF(0)</keyword>
<keyword id="KW-0375">Hydrogen ion transport</keyword>
<keyword id="KW-0406">Ion transport</keyword>
<keyword id="KW-0472">Membrane</keyword>
<keyword id="KW-0812">Transmembrane</keyword>
<keyword id="KW-1133">Transmembrane helix</keyword>
<keyword id="KW-0813">Transport</keyword>
<proteinExistence type="inferred from homology"/>
<protein>
    <recommendedName>
        <fullName evidence="1">ATP synthase subunit a</fullName>
    </recommendedName>
    <alternativeName>
        <fullName evidence="1">ATP synthase F0 sector subunit a</fullName>
    </alternativeName>
    <alternativeName>
        <fullName evidence="1">F-ATPase subunit 6</fullName>
    </alternativeName>
</protein>
<evidence type="ECO:0000255" key="1">
    <source>
        <dbReference type="HAMAP-Rule" id="MF_01393"/>
    </source>
</evidence>
<reference key="1">
    <citation type="journal article" date="2002" name="Mol. Microbiol.">
        <title>Genome sequence of Streptococcus agalactiae, a pathogen causing invasive neonatal disease.</title>
        <authorList>
            <person name="Glaser P."/>
            <person name="Rusniok C."/>
            <person name="Buchrieser C."/>
            <person name="Chevalier F."/>
            <person name="Frangeul L."/>
            <person name="Msadek T."/>
            <person name="Zouine M."/>
            <person name="Couve E."/>
            <person name="Lalioui L."/>
            <person name="Poyart C."/>
            <person name="Trieu-Cuot P."/>
            <person name="Kunst F."/>
        </authorList>
    </citation>
    <scope>NUCLEOTIDE SEQUENCE [LARGE SCALE GENOMIC DNA]</scope>
    <source>
        <strain>NEM316</strain>
    </source>
</reference>
<feature type="chain" id="PRO_0000362476" description="ATP synthase subunit a">
    <location>
        <begin position="1"/>
        <end position="238"/>
    </location>
</feature>
<feature type="transmembrane region" description="Helical" evidence="1">
    <location>
        <begin position="18"/>
        <end position="38"/>
    </location>
</feature>
<feature type="transmembrane region" description="Helical" evidence="1">
    <location>
        <begin position="75"/>
        <end position="95"/>
    </location>
</feature>
<feature type="transmembrane region" description="Helical" evidence="1">
    <location>
        <begin position="112"/>
        <end position="132"/>
    </location>
</feature>
<feature type="transmembrane region" description="Helical" evidence="1">
    <location>
        <begin position="179"/>
        <end position="199"/>
    </location>
</feature>
<feature type="transmembrane region" description="Helical" evidence="1">
    <location>
        <begin position="203"/>
        <end position="223"/>
    </location>
</feature>
<dbReference type="EMBL" id="AL766847">
    <property type="protein sequence ID" value="CAD46520.1"/>
    <property type="molecule type" value="Genomic_DNA"/>
</dbReference>
<dbReference type="RefSeq" id="WP_000446423.1">
    <property type="nucleotide sequence ID" value="NC_004368.1"/>
</dbReference>
<dbReference type="SMR" id="Q8E5V3"/>
<dbReference type="KEGG" id="san:atpB"/>
<dbReference type="eggNOG" id="COG0356">
    <property type="taxonomic scope" value="Bacteria"/>
</dbReference>
<dbReference type="HOGENOM" id="CLU_041018_2_3_9"/>
<dbReference type="Proteomes" id="UP000000823">
    <property type="component" value="Chromosome"/>
</dbReference>
<dbReference type="GO" id="GO:0005886">
    <property type="term" value="C:plasma membrane"/>
    <property type="evidence" value="ECO:0007669"/>
    <property type="project" value="UniProtKB-SubCell"/>
</dbReference>
<dbReference type="GO" id="GO:0045259">
    <property type="term" value="C:proton-transporting ATP synthase complex"/>
    <property type="evidence" value="ECO:0007669"/>
    <property type="project" value="UniProtKB-KW"/>
</dbReference>
<dbReference type="GO" id="GO:0046933">
    <property type="term" value="F:proton-transporting ATP synthase activity, rotational mechanism"/>
    <property type="evidence" value="ECO:0007669"/>
    <property type="project" value="UniProtKB-UniRule"/>
</dbReference>
<dbReference type="GO" id="GO:0042777">
    <property type="term" value="P:proton motive force-driven plasma membrane ATP synthesis"/>
    <property type="evidence" value="ECO:0007669"/>
    <property type="project" value="TreeGrafter"/>
</dbReference>
<dbReference type="CDD" id="cd00310">
    <property type="entry name" value="ATP-synt_Fo_a_6"/>
    <property type="match status" value="1"/>
</dbReference>
<dbReference type="Gene3D" id="1.20.120.220">
    <property type="entry name" value="ATP synthase, F0 complex, subunit A"/>
    <property type="match status" value="1"/>
</dbReference>
<dbReference type="HAMAP" id="MF_01393">
    <property type="entry name" value="ATP_synth_a_bact"/>
    <property type="match status" value="1"/>
</dbReference>
<dbReference type="InterPro" id="IPR045082">
    <property type="entry name" value="ATP_syn_F0_a_bact/chloroplast"/>
</dbReference>
<dbReference type="InterPro" id="IPR000568">
    <property type="entry name" value="ATP_synth_F0_asu"/>
</dbReference>
<dbReference type="InterPro" id="IPR023011">
    <property type="entry name" value="ATP_synth_F0_asu_AS"/>
</dbReference>
<dbReference type="InterPro" id="IPR035908">
    <property type="entry name" value="F0_ATP_A_sf"/>
</dbReference>
<dbReference type="NCBIfam" id="TIGR01131">
    <property type="entry name" value="ATP_synt_6_or_A"/>
    <property type="match status" value="1"/>
</dbReference>
<dbReference type="NCBIfam" id="NF004479">
    <property type="entry name" value="PRK05815.1-4"/>
    <property type="match status" value="1"/>
</dbReference>
<dbReference type="PANTHER" id="PTHR42823">
    <property type="entry name" value="ATP SYNTHASE SUBUNIT A, CHLOROPLASTIC"/>
    <property type="match status" value="1"/>
</dbReference>
<dbReference type="PANTHER" id="PTHR42823:SF3">
    <property type="entry name" value="ATP SYNTHASE SUBUNIT A, CHLOROPLASTIC"/>
    <property type="match status" value="1"/>
</dbReference>
<dbReference type="Pfam" id="PF00119">
    <property type="entry name" value="ATP-synt_A"/>
    <property type="match status" value="1"/>
</dbReference>
<dbReference type="PRINTS" id="PR00123">
    <property type="entry name" value="ATPASEA"/>
</dbReference>
<dbReference type="SUPFAM" id="SSF81336">
    <property type="entry name" value="F1F0 ATP synthase subunit A"/>
    <property type="match status" value="1"/>
</dbReference>
<dbReference type="PROSITE" id="PS00449">
    <property type="entry name" value="ATPASE_A"/>
    <property type="match status" value="1"/>
</dbReference>
<gene>
    <name evidence="1" type="primary">atpB</name>
    <name type="ordered locus">gbs0876</name>
</gene>
<comment type="function">
    <text evidence="1">Key component of the proton channel; it plays a direct role in the translocation of protons across the membrane.</text>
</comment>
<comment type="subunit">
    <text evidence="1">F-type ATPases have 2 components, CF(1) - the catalytic core - and CF(0) - the membrane proton channel. CF(1) has five subunits: alpha(3), beta(3), gamma(1), delta(1), epsilon(1). CF(0) has three main subunits: a(1), b(2) and c(9-12). The alpha and beta chains form an alternating ring which encloses part of the gamma chain. CF(1) is attached to CF(0) by a central stalk formed by the gamma and epsilon chains, while a peripheral stalk is formed by the delta and b chains.</text>
</comment>
<comment type="subcellular location">
    <subcellularLocation>
        <location evidence="1">Cell membrane</location>
        <topology evidence="1">Multi-pass membrane protein</topology>
    </subcellularLocation>
</comment>
<comment type="similarity">
    <text evidence="1">Belongs to the ATPase A chain family.</text>
</comment>
<sequence>MESTSNPTVSFLGIDFDLTILAMSLLTITIIFILVFWASRKMTIKPKGKQNVLEYVYELVNNTISQNLGHYTKNYSLLMFILFSFVFVANNLGLMTSLKTHEHNFWTSPTANFGVDITLSLLVAFICHIEGIRKKGIGGYLKGFLSPTPAMLPMNLLEEVTNVASLALRLFGNIFSGEVVTGLLLQLAVLSPFTGPLAFALNIVWTAFSMFIGFIQAYVFIILSSSYIGHKVHGDEEE</sequence>
<organism>
    <name type="scientific">Streptococcus agalactiae serotype III (strain NEM316)</name>
    <dbReference type="NCBI Taxonomy" id="211110"/>
    <lineage>
        <taxon>Bacteria</taxon>
        <taxon>Bacillati</taxon>
        <taxon>Bacillota</taxon>
        <taxon>Bacilli</taxon>
        <taxon>Lactobacillales</taxon>
        <taxon>Streptococcaceae</taxon>
        <taxon>Streptococcus</taxon>
    </lineage>
</organism>
<accession>Q8E5V3</accession>
<name>ATP6_STRA3</name>